<keyword id="KW-0067">ATP-binding</keyword>
<keyword id="KW-0414">Isoprene biosynthesis</keyword>
<keyword id="KW-0418">Kinase</keyword>
<keyword id="KW-0547">Nucleotide-binding</keyword>
<keyword id="KW-1185">Reference proteome</keyword>
<keyword id="KW-0808">Transferase</keyword>
<organism>
    <name type="scientific">Leptospira interrogans serogroup Icterohaemorrhagiae serovar Lai (strain 56601)</name>
    <dbReference type="NCBI Taxonomy" id="189518"/>
    <lineage>
        <taxon>Bacteria</taxon>
        <taxon>Pseudomonadati</taxon>
        <taxon>Spirochaetota</taxon>
        <taxon>Spirochaetia</taxon>
        <taxon>Leptospirales</taxon>
        <taxon>Leptospiraceae</taxon>
        <taxon>Leptospira</taxon>
    </lineage>
</organism>
<evidence type="ECO:0000255" key="1">
    <source>
        <dbReference type="HAMAP-Rule" id="MF_00061"/>
    </source>
</evidence>
<feature type="chain" id="PRO_0000189229" description="4-diphosphocytidyl-2-C-methyl-D-erythritol kinase">
    <location>
        <begin position="1"/>
        <end position="297"/>
    </location>
</feature>
<feature type="active site" evidence="1">
    <location>
        <position position="6"/>
    </location>
</feature>
<feature type="active site" evidence="1">
    <location>
        <position position="144"/>
    </location>
</feature>
<reference key="1">
    <citation type="journal article" date="2003" name="Nature">
        <title>Unique physiological and pathogenic features of Leptospira interrogans revealed by whole-genome sequencing.</title>
        <authorList>
            <person name="Ren S.-X."/>
            <person name="Fu G."/>
            <person name="Jiang X.-G."/>
            <person name="Zeng R."/>
            <person name="Miao Y.-G."/>
            <person name="Xu H."/>
            <person name="Zhang Y.-X."/>
            <person name="Xiong H."/>
            <person name="Lu G."/>
            <person name="Lu L.-F."/>
            <person name="Jiang H.-Q."/>
            <person name="Jia J."/>
            <person name="Tu Y.-F."/>
            <person name="Jiang J.-X."/>
            <person name="Gu W.-Y."/>
            <person name="Zhang Y.-Q."/>
            <person name="Cai Z."/>
            <person name="Sheng H.-H."/>
            <person name="Yin H.-F."/>
            <person name="Zhang Y."/>
            <person name="Zhu G.-F."/>
            <person name="Wan M."/>
            <person name="Huang H.-L."/>
            <person name="Qian Z."/>
            <person name="Wang S.-Y."/>
            <person name="Ma W."/>
            <person name="Yao Z.-J."/>
            <person name="Shen Y."/>
            <person name="Qiang B.-Q."/>
            <person name="Xia Q.-C."/>
            <person name="Guo X.-K."/>
            <person name="Danchin A."/>
            <person name="Saint Girons I."/>
            <person name="Somerville R.L."/>
            <person name="Wen Y.-M."/>
            <person name="Shi M.-H."/>
            <person name="Chen Z."/>
            <person name="Xu J.-G."/>
            <person name="Zhao G.-P."/>
        </authorList>
    </citation>
    <scope>NUCLEOTIDE SEQUENCE [LARGE SCALE GENOMIC DNA]</scope>
    <source>
        <strain>56601</strain>
    </source>
</reference>
<proteinExistence type="inferred from homology"/>
<protein>
    <recommendedName>
        <fullName evidence="1">4-diphosphocytidyl-2-C-methyl-D-erythritol kinase</fullName>
        <shortName evidence="1">CMK</shortName>
        <ecNumber evidence="1">2.7.1.148</ecNumber>
    </recommendedName>
    <alternativeName>
        <fullName evidence="1">4-(cytidine-5'-diphospho)-2-C-methyl-D-erythritol kinase</fullName>
    </alternativeName>
</protein>
<accession>Q8EZM8</accession>
<name>ISPE_LEPIN</name>
<dbReference type="EC" id="2.7.1.148" evidence="1"/>
<dbReference type="EMBL" id="AE010300">
    <property type="protein sequence ID" value="AAN51022.1"/>
    <property type="molecule type" value="Genomic_DNA"/>
</dbReference>
<dbReference type="RefSeq" id="NP_714004.1">
    <property type="nucleotide sequence ID" value="NC_004342.2"/>
</dbReference>
<dbReference type="RefSeq" id="WP_000625236.1">
    <property type="nucleotide sequence ID" value="NC_004342.2"/>
</dbReference>
<dbReference type="SMR" id="Q8EZM8"/>
<dbReference type="FunCoup" id="Q8EZM8">
    <property type="interactions" value="253"/>
</dbReference>
<dbReference type="STRING" id="189518.LA_3824"/>
<dbReference type="PaxDb" id="189518-LA_3824"/>
<dbReference type="EnsemblBacteria" id="AAN51022">
    <property type="protein sequence ID" value="AAN51022"/>
    <property type="gene ID" value="LA_3824"/>
</dbReference>
<dbReference type="KEGG" id="lil:LA_3824"/>
<dbReference type="PATRIC" id="fig|189518.3.peg.3792"/>
<dbReference type="HOGENOM" id="CLU_053057_1_1_12"/>
<dbReference type="InParanoid" id="Q8EZM8"/>
<dbReference type="OrthoDB" id="9809438at2"/>
<dbReference type="UniPathway" id="UPA00056">
    <property type="reaction ID" value="UER00094"/>
</dbReference>
<dbReference type="Proteomes" id="UP000001408">
    <property type="component" value="Chromosome I"/>
</dbReference>
<dbReference type="GO" id="GO:0050515">
    <property type="term" value="F:4-(cytidine 5'-diphospho)-2-C-methyl-D-erythritol kinase activity"/>
    <property type="evidence" value="ECO:0000318"/>
    <property type="project" value="GO_Central"/>
</dbReference>
<dbReference type="GO" id="GO:0005524">
    <property type="term" value="F:ATP binding"/>
    <property type="evidence" value="ECO:0007669"/>
    <property type="project" value="UniProtKB-UniRule"/>
</dbReference>
<dbReference type="GO" id="GO:0019288">
    <property type="term" value="P:isopentenyl diphosphate biosynthetic process, methylerythritol 4-phosphate pathway"/>
    <property type="evidence" value="ECO:0007669"/>
    <property type="project" value="UniProtKB-UniRule"/>
</dbReference>
<dbReference type="GO" id="GO:0016114">
    <property type="term" value="P:terpenoid biosynthetic process"/>
    <property type="evidence" value="ECO:0007669"/>
    <property type="project" value="InterPro"/>
</dbReference>
<dbReference type="FunFam" id="3.30.70.890:FF:000010">
    <property type="entry name" value="4-diphosphocytidyl-2-C-methyl-D-erythritol kinase"/>
    <property type="match status" value="1"/>
</dbReference>
<dbReference type="Gene3D" id="3.30.230.10">
    <property type="match status" value="1"/>
</dbReference>
<dbReference type="Gene3D" id="3.30.70.890">
    <property type="entry name" value="GHMP kinase, C-terminal domain"/>
    <property type="match status" value="1"/>
</dbReference>
<dbReference type="HAMAP" id="MF_00061">
    <property type="entry name" value="IspE"/>
    <property type="match status" value="1"/>
</dbReference>
<dbReference type="InterPro" id="IPR013750">
    <property type="entry name" value="GHMP_kinase_C_dom"/>
</dbReference>
<dbReference type="InterPro" id="IPR036554">
    <property type="entry name" value="GHMP_kinase_C_sf"/>
</dbReference>
<dbReference type="InterPro" id="IPR006204">
    <property type="entry name" value="GHMP_kinase_N_dom"/>
</dbReference>
<dbReference type="InterPro" id="IPR004424">
    <property type="entry name" value="IspE"/>
</dbReference>
<dbReference type="InterPro" id="IPR020568">
    <property type="entry name" value="Ribosomal_Su5_D2-typ_SF"/>
</dbReference>
<dbReference type="InterPro" id="IPR014721">
    <property type="entry name" value="Ribsml_uS5_D2-typ_fold_subgr"/>
</dbReference>
<dbReference type="NCBIfam" id="TIGR00154">
    <property type="entry name" value="ispE"/>
    <property type="match status" value="1"/>
</dbReference>
<dbReference type="NCBIfam" id="NF011207">
    <property type="entry name" value="PRK14613.1"/>
    <property type="match status" value="1"/>
</dbReference>
<dbReference type="PANTHER" id="PTHR43527">
    <property type="entry name" value="4-DIPHOSPHOCYTIDYL-2-C-METHYL-D-ERYTHRITOL KINASE, CHLOROPLASTIC"/>
    <property type="match status" value="1"/>
</dbReference>
<dbReference type="PANTHER" id="PTHR43527:SF2">
    <property type="entry name" value="4-DIPHOSPHOCYTIDYL-2-C-METHYL-D-ERYTHRITOL KINASE, CHLOROPLASTIC"/>
    <property type="match status" value="1"/>
</dbReference>
<dbReference type="Pfam" id="PF08544">
    <property type="entry name" value="GHMP_kinases_C"/>
    <property type="match status" value="1"/>
</dbReference>
<dbReference type="Pfam" id="PF00288">
    <property type="entry name" value="GHMP_kinases_N"/>
    <property type="match status" value="1"/>
</dbReference>
<dbReference type="PIRSF" id="PIRSF010376">
    <property type="entry name" value="IspE"/>
    <property type="match status" value="1"/>
</dbReference>
<dbReference type="SUPFAM" id="SSF55060">
    <property type="entry name" value="GHMP Kinase, C-terminal domain"/>
    <property type="match status" value="1"/>
</dbReference>
<dbReference type="SUPFAM" id="SSF54211">
    <property type="entry name" value="Ribosomal protein S5 domain 2-like"/>
    <property type="match status" value="1"/>
</dbReference>
<sequence>MISPAKINLGLEIPFKRLDGFHEIRSVFLKISWGDDIEIEPASNGVFELFSNNEIILEKRKLYDQVSERGDIKNNILYKTFIKARSLFPELPGVKIHLTKRISPAGGLGGGSTNAASLLNFLFSWRPFFTSDEMFVLAAEIGSDVPFFLGEGHAFVTGKGEILEEIEVHHGQGILALTPQVMNTSEMYSLLKKPLQESASQKNGNTLSKNLISILKNGDWSSLQGRLWNDFEPVAFQLHPELGVLKDKFLEFGSSYCSLTGSGSSMYGLVQGLEIQEELLQRLRQEFSNLTFVRFNF</sequence>
<gene>
    <name evidence="1" type="primary">ispE</name>
    <name type="ordered locus">LA_3824</name>
</gene>
<comment type="function">
    <text evidence="1">Catalyzes the phosphorylation of the position 2 hydroxy group of 4-diphosphocytidyl-2C-methyl-D-erythritol.</text>
</comment>
<comment type="catalytic activity">
    <reaction evidence="1">
        <text>4-CDP-2-C-methyl-D-erythritol + ATP = 4-CDP-2-C-methyl-D-erythritol 2-phosphate + ADP + H(+)</text>
        <dbReference type="Rhea" id="RHEA:18437"/>
        <dbReference type="ChEBI" id="CHEBI:15378"/>
        <dbReference type="ChEBI" id="CHEBI:30616"/>
        <dbReference type="ChEBI" id="CHEBI:57823"/>
        <dbReference type="ChEBI" id="CHEBI:57919"/>
        <dbReference type="ChEBI" id="CHEBI:456216"/>
        <dbReference type="EC" id="2.7.1.148"/>
    </reaction>
</comment>
<comment type="pathway">
    <text evidence="1">Isoprenoid biosynthesis; isopentenyl diphosphate biosynthesis via DXP pathway; isopentenyl diphosphate from 1-deoxy-D-xylulose 5-phosphate: step 3/6.</text>
</comment>
<comment type="similarity">
    <text evidence="1">Belongs to the GHMP kinase family. IspE subfamily.</text>
</comment>